<accession>A4TJN9</accession>
<feature type="signal peptide" evidence="1">
    <location>
        <begin position="1"/>
        <end position="21"/>
    </location>
</feature>
<feature type="chain" id="PRO_1000021697" description="Outer-membrane lipoprotein LolB">
    <location>
        <begin position="22"/>
        <end position="207"/>
    </location>
</feature>
<feature type="lipid moiety-binding region" description="N-palmitoyl cysteine" evidence="1">
    <location>
        <position position="22"/>
    </location>
</feature>
<feature type="lipid moiety-binding region" description="S-diacylglycerol cysteine" evidence="1">
    <location>
        <position position="22"/>
    </location>
</feature>
<comment type="function">
    <text evidence="1">Plays a critical role in the incorporation of lipoproteins in the outer membrane after they are released by the LolA protein.</text>
</comment>
<comment type="subunit">
    <text evidence="1">Monomer.</text>
</comment>
<comment type="subcellular location">
    <subcellularLocation>
        <location evidence="1">Cell outer membrane</location>
        <topology evidence="1">Lipid-anchor</topology>
    </subcellularLocation>
</comment>
<comment type="similarity">
    <text evidence="1">Belongs to the LolB family.</text>
</comment>
<sequence>MPMRKRHFYRLLPLASLLLAACTIPVSKGPATSPTSPQWRQHEQQLQQLGQFETRGAFAYLSDKQKVYARFFWQQTSPERYRLLLTNPLGSTELELVVQPGVTQLTDNQGKRYVSDDPQEMIQKLTGMSIPLESLRQWILGLPGDTSDFTLDDKYRLKKLTYQQNGVTWVVDYQEYNTQVTPSLPSRLELNQDGQRIKLKMDSWTIK</sequence>
<name>LOLB_YERPP</name>
<keyword id="KW-0998">Cell outer membrane</keyword>
<keyword id="KW-0143">Chaperone</keyword>
<keyword id="KW-0449">Lipoprotein</keyword>
<keyword id="KW-0472">Membrane</keyword>
<keyword id="KW-0564">Palmitate</keyword>
<keyword id="KW-0653">Protein transport</keyword>
<keyword id="KW-0732">Signal</keyword>
<keyword id="KW-0813">Transport</keyword>
<reference key="1">
    <citation type="submission" date="2007-02" db="EMBL/GenBank/DDBJ databases">
        <title>Complete sequence of chromosome of Yersinia pestis Pestoides F.</title>
        <authorList>
            <consortium name="US DOE Joint Genome Institute"/>
            <person name="Copeland A."/>
            <person name="Lucas S."/>
            <person name="Lapidus A."/>
            <person name="Barry K."/>
            <person name="Detter J.C."/>
            <person name="Glavina del Rio T."/>
            <person name="Hammon N."/>
            <person name="Israni S."/>
            <person name="Dalin E."/>
            <person name="Tice H."/>
            <person name="Pitluck S."/>
            <person name="Di Bartolo G."/>
            <person name="Chain P."/>
            <person name="Malfatti S."/>
            <person name="Shin M."/>
            <person name="Vergez L."/>
            <person name="Schmutz J."/>
            <person name="Larimer F."/>
            <person name="Land M."/>
            <person name="Hauser L."/>
            <person name="Worsham P."/>
            <person name="Chu M."/>
            <person name="Bearden S."/>
            <person name="Garcia E."/>
            <person name="Richardson P."/>
        </authorList>
    </citation>
    <scope>NUCLEOTIDE SEQUENCE [LARGE SCALE GENOMIC DNA]</scope>
    <source>
        <strain>Pestoides F</strain>
    </source>
</reference>
<protein>
    <recommendedName>
        <fullName evidence="1">Outer-membrane lipoprotein LolB</fullName>
    </recommendedName>
</protein>
<proteinExistence type="inferred from homology"/>
<evidence type="ECO:0000255" key="1">
    <source>
        <dbReference type="HAMAP-Rule" id="MF_00233"/>
    </source>
</evidence>
<gene>
    <name evidence="1" type="primary">lolB</name>
    <name type="ordered locus">YPDSF_1103</name>
</gene>
<organism>
    <name type="scientific">Yersinia pestis (strain Pestoides F)</name>
    <dbReference type="NCBI Taxonomy" id="386656"/>
    <lineage>
        <taxon>Bacteria</taxon>
        <taxon>Pseudomonadati</taxon>
        <taxon>Pseudomonadota</taxon>
        <taxon>Gammaproteobacteria</taxon>
        <taxon>Enterobacterales</taxon>
        <taxon>Yersiniaceae</taxon>
        <taxon>Yersinia</taxon>
    </lineage>
</organism>
<dbReference type="EMBL" id="CP000668">
    <property type="protein sequence ID" value="ABP39501.1"/>
    <property type="molecule type" value="Genomic_DNA"/>
</dbReference>
<dbReference type="RefSeq" id="WP_002224468.1">
    <property type="nucleotide sequence ID" value="NZ_CP009715.1"/>
</dbReference>
<dbReference type="SMR" id="A4TJN9"/>
<dbReference type="GeneID" id="57976646"/>
<dbReference type="KEGG" id="ypp:YPDSF_1103"/>
<dbReference type="PATRIC" id="fig|386656.14.peg.2729"/>
<dbReference type="GO" id="GO:0009279">
    <property type="term" value="C:cell outer membrane"/>
    <property type="evidence" value="ECO:0007669"/>
    <property type="project" value="UniProtKB-SubCell"/>
</dbReference>
<dbReference type="GO" id="GO:0044874">
    <property type="term" value="P:lipoprotein localization to outer membrane"/>
    <property type="evidence" value="ECO:0007669"/>
    <property type="project" value="UniProtKB-UniRule"/>
</dbReference>
<dbReference type="GO" id="GO:0015031">
    <property type="term" value="P:protein transport"/>
    <property type="evidence" value="ECO:0007669"/>
    <property type="project" value="UniProtKB-KW"/>
</dbReference>
<dbReference type="CDD" id="cd16326">
    <property type="entry name" value="LolB"/>
    <property type="match status" value="1"/>
</dbReference>
<dbReference type="Gene3D" id="2.50.20.10">
    <property type="entry name" value="Lipoprotein localisation LolA/LolB/LppX"/>
    <property type="match status" value="1"/>
</dbReference>
<dbReference type="HAMAP" id="MF_00233">
    <property type="entry name" value="LolB"/>
    <property type="match status" value="1"/>
</dbReference>
<dbReference type="InterPro" id="IPR029046">
    <property type="entry name" value="LolA/LolB/LppX"/>
</dbReference>
<dbReference type="InterPro" id="IPR004565">
    <property type="entry name" value="OM_lipoprot_LolB"/>
</dbReference>
<dbReference type="NCBIfam" id="TIGR00548">
    <property type="entry name" value="lolB"/>
    <property type="match status" value="1"/>
</dbReference>
<dbReference type="Pfam" id="PF03550">
    <property type="entry name" value="LolB"/>
    <property type="match status" value="1"/>
</dbReference>
<dbReference type="SUPFAM" id="SSF89392">
    <property type="entry name" value="Prokaryotic lipoproteins and lipoprotein localization factors"/>
    <property type="match status" value="1"/>
</dbReference>
<dbReference type="PROSITE" id="PS51257">
    <property type="entry name" value="PROKAR_LIPOPROTEIN"/>
    <property type="match status" value="1"/>
</dbReference>